<keyword id="KW-0150">Chloroplast</keyword>
<keyword id="KW-0472">Membrane</keyword>
<keyword id="KW-0520">NAD</keyword>
<keyword id="KW-0521">NADP</keyword>
<keyword id="KW-0934">Plastid</keyword>
<keyword id="KW-0618">Plastoquinone</keyword>
<keyword id="KW-0874">Quinone</keyword>
<keyword id="KW-0793">Thylakoid</keyword>
<keyword id="KW-1278">Translocase</keyword>
<keyword id="KW-0812">Transmembrane</keyword>
<keyword id="KW-1133">Transmembrane helix</keyword>
<keyword id="KW-0813">Transport</keyword>
<organism>
    <name type="scientific">Citrus sinensis</name>
    <name type="common">Sweet orange</name>
    <name type="synonym">Citrus aurantium var. sinensis</name>
    <dbReference type="NCBI Taxonomy" id="2711"/>
    <lineage>
        <taxon>Eukaryota</taxon>
        <taxon>Viridiplantae</taxon>
        <taxon>Streptophyta</taxon>
        <taxon>Embryophyta</taxon>
        <taxon>Tracheophyta</taxon>
        <taxon>Spermatophyta</taxon>
        <taxon>Magnoliopsida</taxon>
        <taxon>eudicotyledons</taxon>
        <taxon>Gunneridae</taxon>
        <taxon>Pentapetalae</taxon>
        <taxon>rosids</taxon>
        <taxon>malvids</taxon>
        <taxon>Sapindales</taxon>
        <taxon>Rutaceae</taxon>
        <taxon>Aurantioideae</taxon>
        <taxon>Citrus</taxon>
    </lineage>
</organism>
<geneLocation type="chloroplast"/>
<sequence length="178" mass="19425">MDLPGPIHDFILVFLGSGLILGGLGVVLFTNPIYSAFSLGLVLVCISLFYILSNSHFVAAAQLLIYVGAVNVLIIFAVMFMNGSDYSKDFQLNLWTIGDGLTSLVCTSIFFSLITTILDTSWYGIIWTTRANQIIEQDLISNSQQIGIHLSTDFFLPFELVSIILLVALIGAIAVARQ</sequence>
<dbReference type="EC" id="7.1.1.-"/>
<dbReference type="EMBL" id="DQ864733">
    <property type="protein sequence ID" value="ABI49074.1"/>
    <property type="molecule type" value="Genomic_DNA"/>
</dbReference>
<dbReference type="RefSeq" id="YP_740530.1">
    <property type="nucleotide sequence ID" value="NC_008334.1"/>
</dbReference>
<dbReference type="SMR" id="Q09MC3"/>
<dbReference type="GeneID" id="4271142"/>
<dbReference type="KEGG" id="cit:4271142"/>
<dbReference type="OrthoDB" id="888318at71240"/>
<dbReference type="GO" id="GO:0009535">
    <property type="term" value="C:chloroplast thylakoid membrane"/>
    <property type="evidence" value="ECO:0007669"/>
    <property type="project" value="UniProtKB-SubCell"/>
</dbReference>
<dbReference type="GO" id="GO:0008137">
    <property type="term" value="F:NADH dehydrogenase (ubiquinone) activity"/>
    <property type="evidence" value="ECO:0007669"/>
    <property type="project" value="InterPro"/>
</dbReference>
<dbReference type="GO" id="GO:0048038">
    <property type="term" value="F:quinone binding"/>
    <property type="evidence" value="ECO:0007669"/>
    <property type="project" value="UniProtKB-KW"/>
</dbReference>
<dbReference type="FunFam" id="1.20.120.1200:FF:000002">
    <property type="entry name" value="NAD(P)H-quinone oxidoreductase subunit 6, chloroplastic"/>
    <property type="match status" value="1"/>
</dbReference>
<dbReference type="Gene3D" id="1.20.120.1200">
    <property type="entry name" value="NADH-ubiquinone/plastoquinone oxidoreductase chain 6, subunit NuoJ"/>
    <property type="match status" value="1"/>
</dbReference>
<dbReference type="InterPro" id="IPR050290">
    <property type="entry name" value="NAD(P)H-Q_Oxidoreduct_6"/>
</dbReference>
<dbReference type="InterPro" id="IPR001457">
    <property type="entry name" value="NADH_UbQ/plastoQ_OxRdtase_su6"/>
</dbReference>
<dbReference type="InterPro" id="IPR042106">
    <property type="entry name" value="Nuo/plastoQ_OxRdtase_6_NuoJ"/>
</dbReference>
<dbReference type="PANTHER" id="PTHR48479">
    <property type="entry name" value="NAD(P)H-QUINONE OXIDOREDUCTASE SUBUNIT 6, CHLOROPLASTIC"/>
    <property type="match status" value="1"/>
</dbReference>
<dbReference type="PANTHER" id="PTHR48479:SF1">
    <property type="entry name" value="NAD(P)H-QUINONE OXIDOREDUCTASE SUBUNIT 6, CHLOROPLASTIC"/>
    <property type="match status" value="1"/>
</dbReference>
<dbReference type="Pfam" id="PF00499">
    <property type="entry name" value="Oxidored_q3"/>
    <property type="match status" value="1"/>
</dbReference>
<accession>Q09MC3</accession>
<reference key="1">
    <citation type="journal article" date="2006" name="BMC Plant Biol.">
        <title>The complete chloroplast genome sequence of Citrus sinensis (L.) Osbeck var 'Ridge Pineapple': organization and phylogenetic relationships to other angiosperms.</title>
        <authorList>
            <person name="Bausher M.G."/>
            <person name="Singh N.D."/>
            <person name="Lee S.-B."/>
            <person name="Jansen R.K."/>
            <person name="Daniell H."/>
        </authorList>
    </citation>
    <scope>NUCLEOTIDE SEQUENCE [LARGE SCALE GENOMIC DNA]</scope>
    <source>
        <strain>cv. Osbeck var. Ridge Pineapple</strain>
    </source>
</reference>
<feature type="chain" id="PRO_0000360242" description="NAD(P)H-quinone oxidoreductase subunit 6, chloroplastic">
    <location>
        <begin position="1"/>
        <end position="178"/>
    </location>
</feature>
<feature type="transmembrane region" description="Helical" evidence="2">
    <location>
        <begin position="10"/>
        <end position="30"/>
    </location>
</feature>
<feature type="transmembrane region" description="Helical" evidence="2">
    <location>
        <begin position="32"/>
        <end position="52"/>
    </location>
</feature>
<feature type="transmembrane region" description="Helical" evidence="2">
    <location>
        <begin position="61"/>
        <end position="81"/>
    </location>
</feature>
<feature type="transmembrane region" description="Helical" evidence="2">
    <location>
        <begin position="94"/>
        <end position="114"/>
    </location>
</feature>
<feature type="transmembrane region" description="Helical" evidence="2">
    <location>
        <begin position="154"/>
        <end position="174"/>
    </location>
</feature>
<comment type="function">
    <text evidence="1">NDH shuttles electrons from NAD(P)H:plastoquinone, via FMN and iron-sulfur (Fe-S) centers, to quinones in the photosynthetic chain and possibly in a chloroplast respiratory chain. The immediate electron acceptor for the enzyme in this species is believed to be plastoquinone. Couples the redox reaction to proton translocation, and thus conserves the redox energy in a proton gradient (By similarity).</text>
</comment>
<comment type="catalytic activity">
    <reaction>
        <text>a plastoquinone + NADH + (n+1) H(+)(in) = a plastoquinol + NAD(+) + n H(+)(out)</text>
        <dbReference type="Rhea" id="RHEA:42608"/>
        <dbReference type="Rhea" id="RHEA-COMP:9561"/>
        <dbReference type="Rhea" id="RHEA-COMP:9562"/>
        <dbReference type="ChEBI" id="CHEBI:15378"/>
        <dbReference type="ChEBI" id="CHEBI:17757"/>
        <dbReference type="ChEBI" id="CHEBI:57540"/>
        <dbReference type="ChEBI" id="CHEBI:57945"/>
        <dbReference type="ChEBI" id="CHEBI:62192"/>
    </reaction>
</comment>
<comment type="catalytic activity">
    <reaction>
        <text>a plastoquinone + NADPH + (n+1) H(+)(in) = a plastoquinol + NADP(+) + n H(+)(out)</text>
        <dbReference type="Rhea" id="RHEA:42612"/>
        <dbReference type="Rhea" id="RHEA-COMP:9561"/>
        <dbReference type="Rhea" id="RHEA-COMP:9562"/>
        <dbReference type="ChEBI" id="CHEBI:15378"/>
        <dbReference type="ChEBI" id="CHEBI:17757"/>
        <dbReference type="ChEBI" id="CHEBI:57783"/>
        <dbReference type="ChEBI" id="CHEBI:58349"/>
        <dbReference type="ChEBI" id="CHEBI:62192"/>
    </reaction>
</comment>
<comment type="subunit">
    <text evidence="1">NDH is composed of at least 16 different subunits, 5 of which are encoded in the nucleus.</text>
</comment>
<comment type="subcellular location">
    <subcellularLocation>
        <location evidence="1">Plastid</location>
        <location evidence="1">Chloroplast thylakoid membrane</location>
        <topology evidence="1">Multi-pass membrane protein</topology>
    </subcellularLocation>
</comment>
<comment type="similarity">
    <text evidence="3">Belongs to the complex I subunit 6 family.</text>
</comment>
<name>NU6C_CITSI</name>
<evidence type="ECO:0000250" key="1"/>
<evidence type="ECO:0000255" key="2"/>
<evidence type="ECO:0000305" key="3"/>
<proteinExistence type="inferred from homology"/>
<gene>
    <name type="primary">ndhG</name>
</gene>
<protein>
    <recommendedName>
        <fullName>NAD(P)H-quinone oxidoreductase subunit 6, chloroplastic</fullName>
        <ecNumber>7.1.1.-</ecNumber>
    </recommendedName>
    <alternativeName>
        <fullName>NAD(P)H dehydrogenase subunit 6</fullName>
    </alternativeName>
    <alternativeName>
        <fullName>NADH-plastoquinone oxidoreductase subunit 6</fullName>
    </alternativeName>
</protein>